<gene>
    <name evidence="1" type="primary">argG</name>
    <name type="ordered locus">NT01CX_0135</name>
</gene>
<organism>
    <name type="scientific">Clostridium novyi (strain NT)</name>
    <dbReference type="NCBI Taxonomy" id="386415"/>
    <lineage>
        <taxon>Bacteria</taxon>
        <taxon>Bacillati</taxon>
        <taxon>Bacillota</taxon>
        <taxon>Clostridia</taxon>
        <taxon>Eubacteriales</taxon>
        <taxon>Clostridiaceae</taxon>
        <taxon>Clostridium</taxon>
    </lineage>
</organism>
<name>ASSY_CLONN</name>
<comment type="catalytic activity">
    <reaction evidence="1">
        <text>L-citrulline + L-aspartate + ATP = 2-(N(omega)-L-arginino)succinate + AMP + diphosphate + H(+)</text>
        <dbReference type="Rhea" id="RHEA:10932"/>
        <dbReference type="ChEBI" id="CHEBI:15378"/>
        <dbReference type="ChEBI" id="CHEBI:29991"/>
        <dbReference type="ChEBI" id="CHEBI:30616"/>
        <dbReference type="ChEBI" id="CHEBI:33019"/>
        <dbReference type="ChEBI" id="CHEBI:57472"/>
        <dbReference type="ChEBI" id="CHEBI:57743"/>
        <dbReference type="ChEBI" id="CHEBI:456215"/>
        <dbReference type="EC" id="6.3.4.5"/>
    </reaction>
</comment>
<comment type="pathway">
    <text evidence="1">Amino-acid biosynthesis; L-arginine biosynthesis; L-arginine from L-ornithine and carbamoyl phosphate: step 2/3.</text>
</comment>
<comment type="subunit">
    <text evidence="1">Homotetramer.</text>
</comment>
<comment type="subcellular location">
    <subcellularLocation>
        <location evidence="1">Cytoplasm</location>
    </subcellularLocation>
</comment>
<comment type="similarity">
    <text evidence="1">Belongs to the argininosuccinate synthase family. Type 1 subfamily.</text>
</comment>
<evidence type="ECO:0000255" key="1">
    <source>
        <dbReference type="HAMAP-Rule" id="MF_00005"/>
    </source>
</evidence>
<proteinExistence type="inferred from homology"/>
<sequence length="402" mass="45413">MKEKVVLAYSGGLDTSITIHWLKENYNLDVIACCVNVGQDEDFDEIKKKAIKSGATKIYVEDVKDEFVSEYIYKGVKANAVYEGKYLLGTSFARPLIAKKLVEVAHKEGAKYICHGCTGKGNDQVRFEVGIMSLDPSIKVIAPWRIWNIKSREDAVDYANANGIEVPVTKEKIYSRDQNLWHISHEGGDLENIRNEHKTDMYCMTVPPEKAKDEVSYIKITFEKGEAKKLDDVEMSPVEILEKLNKIGGENGIGVIDLLENRLVGMKSRGVYETPGGTILYAAHKELEYLTMQKETFHFKQMVSQKYGELVYNGLWFSTLKESLDAFIDKTQEVVNGTVRLKLYKGNIMVAGMESPNALYEESISSFGASDFYDHKDAEGFINLFGLPYKINAMIQLKNQEN</sequence>
<protein>
    <recommendedName>
        <fullName evidence="1">Argininosuccinate synthase</fullName>
        <ecNumber evidence="1">6.3.4.5</ecNumber>
    </recommendedName>
    <alternativeName>
        <fullName evidence="1">Citrulline--aspartate ligase</fullName>
    </alternativeName>
</protein>
<accession>A0Q1Z2</accession>
<feature type="chain" id="PRO_1000000393" description="Argininosuccinate synthase">
    <location>
        <begin position="1"/>
        <end position="402"/>
    </location>
</feature>
<feature type="binding site" evidence="1">
    <location>
        <begin position="8"/>
        <end position="16"/>
    </location>
    <ligand>
        <name>ATP</name>
        <dbReference type="ChEBI" id="CHEBI:30616"/>
    </ligand>
</feature>
<feature type="binding site" evidence="1">
    <location>
        <position position="86"/>
    </location>
    <ligand>
        <name>L-citrulline</name>
        <dbReference type="ChEBI" id="CHEBI:57743"/>
    </ligand>
</feature>
<feature type="binding site" evidence="1">
    <location>
        <position position="91"/>
    </location>
    <ligand>
        <name>L-citrulline</name>
        <dbReference type="ChEBI" id="CHEBI:57743"/>
    </ligand>
</feature>
<feature type="binding site" evidence="1">
    <location>
        <position position="116"/>
    </location>
    <ligand>
        <name>ATP</name>
        <dbReference type="ChEBI" id="CHEBI:30616"/>
    </ligand>
</feature>
<feature type="binding site" evidence="1">
    <location>
        <position position="118"/>
    </location>
    <ligand>
        <name>L-aspartate</name>
        <dbReference type="ChEBI" id="CHEBI:29991"/>
    </ligand>
</feature>
<feature type="binding site" evidence="1">
    <location>
        <position position="122"/>
    </location>
    <ligand>
        <name>L-aspartate</name>
        <dbReference type="ChEBI" id="CHEBI:29991"/>
    </ligand>
</feature>
<feature type="binding site" evidence="1">
    <location>
        <position position="122"/>
    </location>
    <ligand>
        <name>L-citrulline</name>
        <dbReference type="ChEBI" id="CHEBI:57743"/>
    </ligand>
</feature>
<feature type="binding site" evidence="1">
    <location>
        <position position="123"/>
    </location>
    <ligand>
        <name>L-aspartate</name>
        <dbReference type="ChEBI" id="CHEBI:29991"/>
    </ligand>
</feature>
<feature type="binding site" evidence="1">
    <location>
        <position position="126"/>
    </location>
    <ligand>
        <name>L-citrulline</name>
        <dbReference type="ChEBI" id="CHEBI:57743"/>
    </ligand>
</feature>
<feature type="binding site" evidence="1">
    <location>
        <position position="175"/>
    </location>
    <ligand>
        <name>L-citrulline</name>
        <dbReference type="ChEBI" id="CHEBI:57743"/>
    </ligand>
</feature>
<feature type="binding site" evidence="1">
    <location>
        <position position="184"/>
    </location>
    <ligand>
        <name>L-citrulline</name>
        <dbReference type="ChEBI" id="CHEBI:57743"/>
    </ligand>
</feature>
<feature type="binding site" evidence="1">
    <location>
        <position position="260"/>
    </location>
    <ligand>
        <name>L-citrulline</name>
        <dbReference type="ChEBI" id="CHEBI:57743"/>
    </ligand>
</feature>
<feature type="binding site" evidence="1">
    <location>
        <position position="272"/>
    </location>
    <ligand>
        <name>L-citrulline</name>
        <dbReference type="ChEBI" id="CHEBI:57743"/>
    </ligand>
</feature>
<reference key="1">
    <citation type="journal article" date="2006" name="Nat. Biotechnol.">
        <title>The genome and transcriptomes of the anti-tumor agent Clostridium novyi-NT.</title>
        <authorList>
            <person name="Bettegowda C."/>
            <person name="Huang X."/>
            <person name="Lin J."/>
            <person name="Cheong I."/>
            <person name="Kohli M."/>
            <person name="Szabo S.A."/>
            <person name="Zhang X."/>
            <person name="Diaz L.A. Jr."/>
            <person name="Velculescu V.E."/>
            <person name="Parmigiani G."/>
            <person name="Kinzler K.W."/>
            <person name="Vogelstein B."/>
            <person name="Zhou S."/>
        </authorList>
    </citation>
    <scope>NUCLEOTIDE SEQUENCE [LARGE SCALE GENOMIC DNA]</scope>
    <source>
        <strain>NT</strain>
    </source>
</reference>
<dbReference type="EC" id="6.3.4.5" evidence="1"/>
<dbReference type="EMBL" id="CP000382">
    <property type="protein sequence ID" value="ABK61403.1"/>
    <property type="molecule type" value="Genomic_DNA"/>
</dbReference>
<dbReference type="RefSeq" id="WP_011722633.1">
    <property type="nucleotide sequence ID" value="NC_008593.1"/>
</dbReference>
<dbReference type="SMR" id="A0Q1Z2"/>
<dbReference type="STRING" id="386415.NT01CX_0135"/>
<dbReference type="KEGG" id="cno:NT01CX_0135"/>
<dbReference type="eggNOG" id="COG0137">
    <property type="taxonomic scope" value="Bacteria"/>
</dbReference>
<dbReference type="HOGENOM" id="CLU_032784_4_2_9"/>
<dbReference type="UniPathway" id="UPA00068">
    <property type="reaction ID" value="UER00113"/>
</dbReference>
<dbReference type="Proteomes" id="UP000008220">
    <property type="component" value="Chromosome"/>
</dbReference>
<dbReference type="GO" id="GO:0005737">
    <property type="term" value="C:cytoplasm"/>
    <property type="evidence" value="ECO:0007669"/>
    <property type="project" value="UniProtKB-SubCell"/>
</dbReference>
<dbReference type="GO" id="GO:0004055">
    <property type="term" value="F:argininosuccinate synthase activity"/>
    <property type="evidence" value="ECO:0007669"/>
    <property type="project" value="UniProtKB-UniRule"/>
</dbReference>
<dbReference type="GO" id="GO:0005524">
    <property type="term" value="F:ATP binding"/>
    <property type="evidence" value="ECO:0007669"/>
    <property type="project" value="UniProtKB-UniRule"/>
</dbReference>
<dbReference type="GO" id="GO:0000053">
    <property type="term" value="P:argininosuccinate metabolic process"/>
    <property type="evidence" value="ECO:0007669"/>
    <property type="project" value="TreeGrafter"/>
</dbReference>
<dbReference type="GO" id="GO:0006526">
    <property type="term" value="P:L-arginine biosynthetic process"/>
    <property type="evidence" value="ECO:0007669"/>
    <property type="project" value="UniProtKB-UniRule"/>
</dbReference>
<dbReference type="GO" id="GO:0000050">
    <property type="term" value="P:urea cycle"/>
    <property type="evidence" value="ECO:0007669"/>
    <property type="project" value="TreeGrafter"/>
</dbReference>
<dbReference type="CDD" id="cd01999">
    <property type="entry name" value="ASS"/>
    <property type="match status" value="1"/>
</dbReference>
<dbReference type="FunFam" id="3.40.50.620:FF:000019">
    <property type="entry name" value="Argininosuccinate synthase"/>
    <property type="match status" value="1"/>
</dbReference>
<dbReference type="FunFam" id="3.90.1260.10:FF:000007">
    <property type="entry name" value="Argininosuccinate synthase"/>
    <property type="match status" value="1"/>
</dbReference>
<dbReference type="Gene3D" id="3.90.1260.10">
    <property type="entry name" value="Argininosuccinate synthetase, chain A, domain 2"/>
    <property type="match status" value="1"/>
</dbReference>
<dbReference type="Gene3D" id="3.40.50.620">
    <property type="entry name" value="HUPs"/>
    <property type="match status" value="1"/>
</dbReference>
<dbReference type="Gene3D" id="1.20.5.470">
    <property type="entry name" value="Single helix bin"/>
    <property type="match status" value="1"/>
</dbReference>
<dbReference type="HAMAP" id="MF_00005">
    <property type="entry name" value="Arg_succ_synth_type1"/>
    <property type="match status" value="1"/>
</dbReference>
<dbReference type="InterPro" id="IPR048268">
    <property type="entry name" value="Arginosuc_syn_C"/>
</dbReference>
<dbReference type="InterPro" id="IPR048267">
    <property type="entry name" value="Arginosuc_syn_N"/>
</dbReference>
<dbReference type="InterPro" id="IPR001518">
    <property type="entry name" value="Arginosuc_synth"/>
</dbReference>
<dbReference type="InterPro" id="IPR018223">
    <property type="entry name" value="Arginosuc_synth_CS"/>
</dbReference>
<dbReference type="InterPro" id="IPR023434">
    <property type="entry name" value="Arginosuc_synth_type_1_subfam"/>
</dbReference>
<dbReference type="InterPro" id="IPR024074">
    <property type="entry name" value="AS_cat/multimer_dom_body"/>
</dbReference>
<dbReference type="InterPro" id="IPR014729">
    <property type="entry name" value="Rossmann-like_a/b/a_fold"/>
</dbReference>
<dbReference type="NCBIfam" id="TIGR00032">
    <property type="entry name" value="argG"/>
    <property type="match status" value="1"/>
</dbReference>
<dbReference type="NCBIfam" id="NF001770">
    <property type="entry name" value="PRK00509.1"/>
    <property type="match status" value="1"/>
</dbReference>
<dbReference type="PANTHER" id="PTHR11587">
    <property type="entry name" value="ARGININOSUCCINATE SYNTHASE"/>
    <property type="match status" value="1"/>
</dbReference>
<dbReference type="PANTHER" id="PTHR11587:SF2">
    <property type="entry name" value="ARGININOSUCCINATE SYNTHASE"/>
    <property type="match status" value="1"/>
</dbReference>
<dbReference type="Pfam" id="PF20979">
    <property type="entry name" value="Arginosuc_syn_C"/>
    <property type="match status" value="1"/>
</dbReference>
<dbReference type="Pfam" id="PF00764">
    <property type="entry name" value="Arginosuc_synth"/>
    <property type="match status" value="1"/>
</dbReference>
<dbReference type="SUPFAM" id="SSF52402">
    <property type="entry name" value="Adenine nucleotide alpha hydrolases-like"/>
    <property type="match status" value="1"/>
</dbReference>
<dbReference type="SUPFAM" id="SSF69864">
    <property type="entry name" value="Argininosuccinate synthetase, C-terminal domain"/>
    <property type="match status" value="1"/>
</dbReference>
<dbReference type="PROSITE" id="PS00564">
    <property type="entry name" value="ARGININOSUCCIN_SYN_1"/>
    <property type="match status" value="1"/>
</dbReference>
<dbReference type="PROSITE" id="PS00565">
    <property type="entry name" value="ARGININOSUCCIN_SYN_2"/>
    <property type="match status" value="1"/>
</dbReference>
<keyword id="KW-0028">Amino-acid biosynthesis</keyword>
<keyword id="KW-0055">Arginine biosynthesis</keyword>
<keyword id="KW-0067">ATP-binding</keyword>
<keyword id="KW-0963">Cytoplasm</keyword>
<keyword id="KW-0436">Ligase</keyword>
<keyword id="KW-0547">Nucleotide-binding</keyword>
<keyword id="KW-1185">Reference proteome</keyword>